<gene>
    <name evidence="1" type="primary">nfuA</name>
    <name type="ordered locus">SbBS512_E3795</name>
</gene>
<sequence>MIRISDAAQAHFAKLLANQEEGTQIRVFVINPGTPNAECGVSYCPPDAVEATDTALKFDLLTAYVDELSAPYLEDAEIDFVTDQLGSQLTLKAPNAKMRKVADDAPLMERVEYMLQSQINPQLAGHGGRVSLMEITEDGYAILQFGGGCNGCSMVDVTLKEGIEKQLLNEFPELKGVRDLTEHQRGEHSYY</sequence>
<evidence type="ECO:0000255" key="1">
    <source>
        <dbReference type="HAMAP-Rule" id="MF_01637"/>
    </source>
</evidence>
<keyword id="KW-0004">4Fe-4S</keyword>
<keyword id="KW-0408">Iron</keyword>
<keyword id="KW-0411">Iron-sulfur</keyword>
<keyword id="KW-0479">Metal-binding</keyword>
<keyword id="KW-1185">Reference proteome</keyword>
<reference key="1">
    <citation type="submission" date="2008-05" db="EMBL/GenBank/DDBJ databases">
        <title>Complete sequence of Shigella boydii serotype 18 strain BS512.</title>
        <authorList>
            <person name="Rasko D.A."/>
            <person name="Rosovitz M."/>
            <person name="Maurelli A.T."/>
            <person name="Myers G."/>
            <person name="Seshadri R."/>
            <person name="Cer R."/>
            <person name="Jiang L."/>
            <person name="Ravel J."/>
            <person name="Sebastian Y."/>
        </authorList>
    </citation>
    <scope>NUCLEOTIDE SEQUENCE [LARGE SCALE GENOMIC DNA]</scope>
    <source>
        <strain>CDC 3083-94 / BS512</strain>
    </source>
</reference>
<accession>B2U3M4</accession>
<protein>
    <recommendedName>
        <fullName evidence="1">Fe/S biogenesis protein NfuA</fullName>
    </recommendedName>
</protein>
<name>NFUA_SHIB3</name>
<feature type="chain" id="PRO_1000186782" description="Fe/S biogenesis protein NfuA">
    <location>
        <begin position="1"/>
        <end position="191"/>
    </location>
</feature>
<feature type="binding site" evidence="1">
    <location>
        <position position="149"/>
    </location>
    <ligand>
        <name>[4Fe-4S] cluster</name>
        <dbReference type="ChEBI" id="CHEBI:49883"/>
    </ligand>
</feature>
<feature type="binding site" evidence="1">
    <location>
        <position position="152"/>
    </location>
    <ligand>
        <name>[4Fe-4S] cluster</name>
        <dbReference type="ChEBI" id="CHEBI:49883"/>
    </ligand>
</feature>
<comment type="function">
    <text evidence="1">Involved in iron-sulfur cluster biogenesis. Binds a 4Fe-4S cluster, can transfer this cluster to apoproteins, and thereby intervenes in the maturation of Fe/S proteins. Could also act as a scaffold/chaperone for damaged Fe/S proteins.</text>
</comment>
<comment type="cofactor">
    <cofactor evidence="1">
        <name>[4Fe-4S] cluster</name>
        <dbReference type="ChEBI" id="CHEBI:49883"/>
    </cofactor>
    <text evidence="1">Binds 1 [4Fe-4S] cluster per subunit. The cluster is presumably bound at the interface of two monomers.</text>
</comment>
<comment type="subunit">
    <text evidence="1">Homodimer.</text>
</comment>
<comment type="similarity">
    <text evidence="1">Belongs to the NfuA family.</text>
</comment>
<organism>
    <name type="scientific">Shigella boydii serotype 18 (strain CDC 3083-94 / BS512)</name>
    <dbReference type="NCBI Taxonomy" id="344609"/>
    <lineage>
        <taxon>Bacteria</taxon>
        <taxon>Pseudomonadati</taxon>
        <taxon>Pseudomonadota</taxon>
        <taxon>Gammaproteobacteria</taxon>
        <taxon>Enterobacterales</taxon>
        <taxon>Enterobacteriaceae</taxon>
        <taxon>Shigella</taxon>
    </lineage>
</organism>
<proteinExistence type="inferred from homology"/>
<dbReference type="EMBL" id="CP001063">
    <property type="protein sequence ID" value="ACD07291.1"/>
    <property type="molecule type" value="Genomic_DNA"/>
</dbReference>
<dbReference type="RefSeq" id="WP_000619389.1">
    <property type="nucleotide sequence ID" value="NC_010658.1"/>
</dbReference>
<dbReference type="SMR" id="B2U3M4"/>
<dbReference type="STRING" id="344609.SbBS512_E3795"/>
<dbReference type="GeneID" id="93778582"/>
<dbReference type="KEGG" id="sbc:SbBS512_E3795"/>
<dbReference type="HOGENOM" id="CLU_094569_0_0_6"/>
<dbReference type="Proteomes" id="UP000001030">
    <property type="component" value="Chromosome"/>
</dbReference>
<dbReference type="GO" id="GO:0051539">
    <property type="term" value="F:4 iron, 4 sulfur cluster binding"/>
    <property type="evidence" value="ECO:0007669"/>
    <property type="project" value="UniProtKB-UniRule"/>
</dbReference>
<dbReference type="GO" id="GO:0005506">
    <property type="term" value="F:iron ion binding"/>
    <property type="evidence" value="ECO:0007669"/>
    <property type="project" value="InterPro"/>
</dbReference>
<dbReference type="GO" id="GO:0016226">
    <property type="term" value="P:iron-sulfur cluster assembly"/>
    <property type="evidence" value="ECO:0007669"/>
    <property type="project" value="UniProtKB-UniRule"/>
</dbReference>
<dbReference type="GO" id="GO:0051604">
    <property type="term" value="P:protein maturation"/>
    <property type="evidence" value="ECO:0007669"/>
    <property type="project" value="UniProtKB-UniRule"/>
</dbReference>
<dbReference type="FunFam" id="2.60.300.12:FF:000004">
    <property type="entry name" value="Fe/S biogenesis protein NfuA"/>
    <property type="match status" value="1"/>
</dbReference>
<dbReference type="FunFam" id="3.30.300.130:FF:000002">
    <property type="entry name" value="Fe/S biogenesis protein NfuA"/>
    <property type="match status" value="1"/>
</dbReference>
<dbReference type="Gene3D" id="3.30.300.130">
    <property type="entry name" value="Fe-S cluster assembly (FSCA)"/>
    <property type="match status" value="1"/>
</dbReference>
<dbReference type="Gene3D" id="2.60.300.12">
    <property type="entry name" value="HesB-like domain"/>
    <property type="match status" value="1"/>
</dbReference>
<dbReference type="HAMAP" id="MF_01637">
    <property type="entry name" value="Fe_S_biogen_NfuA"/>
    <property type="match status" value="1"/>
</dbReference>
<dbReference type="InterPro" id="IPR017726">
    <property type="entry name" value="Fe/S_biogenesis_protein_NfuA"/>
</dbReference>
<dbReference type="InterPro" id="IPR000361">
    <property type="entry name" value="FeS_biogenesis"/>
</dbReference>
<dbReference type="InterPro" id="IPR034904">
    <property type="entry name" value="FSCA_dom_sf"/>
</dbReference>
<dbReference type="InterPro" id="IPR035903">
    <property type="entry name" value="HesB-like_dom_sf"/>
</dbReference>
<dbReference type="InterPro" id="IPR001075">
    <property type="entry name" value="NIF_FeS_clus_asmbl_NifU_C"/>
</dbReference>
<dbReference type="NCBIfam" id="NF008392">
    <property type="entry name" value="PRK11190.1"/>
    <property type="match status" value="1"/>
</dbReference>
<dbReference type="NCBIfam" id="TIGR03341">
    <property type="entry name" value="YhgI_GntY"/>
    <property type="match status" value="1"/>
</dbReference>
<dbReference type="PANTHER" id="PTHR11178:SF51">
    <property type="entry name" value="FE_S BIOGENESIS PROTEIN NFUA"/>
    <property type="match status" value="1"/>
</dbReference>
<dbReference type="PANTHER" id="PTHR11178">
    <property type="entry name" value="IRON-SULFUR CLUSTER SCAFFOLD PROTEIN NFU-RELATED"/>
    <property type="match status" value="1"/>
</dbReference>
<dbReference type="Pfam" id="PF01521">
    <property type="entry name" value="Fe-S_biosyn"/>
    <property type="match status" value="1"/>
</dbReference>
<dbReference type="Pfam" id="PF01106">
    <property type="entry name" value="NifU"/>
    <property type="match status" value="1"/>
</dbReference>
<dbReference type="SUPFAM" id="SSF117916">
    <property type="entry name" value="Fe-S cluster assembly (FSCA) domain-like"/>
    <property type="match status" value="1"/>
</dbReference>
<dbReference type="SUPFAM" id="SSF89360">
    <property type="entry name" value="HesB-like domain"/>
    <property type="match status" value="1"/>
</dbReference>